<feature type="signal peptide" evidence="1">
    <location>
        <begin position="1"/>
        <end position="22"/>
    </location>
</feature>
<feature type="chain" id="PRO_1000136607" description="Glucans biosynthesis protein G">
    <location>
        <begin position="23"/>
        <end position="511"/>
    </location>
</feature>
<accession>B7MIJ0</accession>
<gene>
    <name evidence="1" type="primary">mdoG</name>
    <name evidence="1" type="synonym">opgG</name>
    <name type="ordered locus">ECS88_1062</name>
</gene>
<keyword id="KW-0574">Periplasm</keyword>
<keyword id="KW-1185">Reference proteome</keyword>
<keyword id="KW-0732">Signal</keyword>
<proteinExistence type="inferred from homology"/>
<evidence type="ECO:0000255" key="1">
    <source>
        <dbReference type="HAMAP-Rule" id="MF_01069"/>
    </source>
</evidence>
<organism>
    <name type="scientific">Escherichia coli O45:K1 (strain S88 / ExPEC)</name>
    <dbReference type="NCBI Taxonomy" id="585035"/>
    <lineage>
        <taxon>Bacteria</taxon>
        <taxon>Pseudomonadati</taxon>
        <taxon>Pseudomonadota</taxon>
        <taxon>Gammaproteobacteria</taxon>
        <taxon>Enterobacterales</taxon>
        <taxon>Enterobacteriaceae</taxon>
        <taxon>Escherichia</taxon>
    </lineage>
</organism>
<name>OPGG_ECO45</name>
<sequence length="511" mass="57882">MMKMRWLSAAVMLTLYTSSSWAFSIDDVAKQAQSLAGKGYEAPKSNLPSVFRDMKYADYQQIQFNHDKAYWNNLKTPFKLEFYHQGMYFDTPVKINEVTATAVKRIKYSPDYFTFGDVQHDKDTVKDLGFAGFKVLYPINSKDKNDEIVSMLGASYFRVIGAGQVYGLSARGLAIDTALPSGEEFPRFKEFWIERPKPTDKRLTIYALLDSPRATGAYKFVVMPGRDTVVDVQSKIYLRDKVGKLGVAPLTSMFLFGPNQPSPANNYRPELHDSNGLSIHAGNGEWIWRPLNNPKHLAVSSFSMENPQGFGLLQRGRDFSRFEDLDDRYDLRPSAWVTPKGEWGKGSVELVEIPTNDETNDNIVAYWTPDQLPEPGKEMNFKYTITFSRDEDKLHAPDNAWVQQTRRSTGDVKQSNLIRQPDGTIAFVVDFTGAEMKKLPEDTPVTAQTSIGDNGEIVESTVRYNPVTKGWRLVMRVKVKDAKKTTEMRAALVNADQTLSETWSYQLPANE</sequence>
<protein>
    <recommendedName>
        <fullName evidence="1">Glucans biosynthesis protein G</fullName>
    </recommendedName>
</protein>
<comment type="function">
    <text evidence="1">Involved in the biosynthesis of osmoregulated periplasmic glucans (OPGs).</text>
</comment>
<comment type="pathway">
    <text evidence="1">Glycan metabolism; osmoregulated periplasmic glucan (OPG) biosynthesis.</text>
</comment>
<comment type="subcellular location">
    <subcellularLocation>
        <location evidence="1">Periplasm</location>
    </subcellularLocation>
</comment>
<comment type="similarity">
    <text evidence="1">Belongs to the OpgD/OpgG family.</text>
</comment>
<dbReference type="EMBL" id="CU928161">
    <property type="protein sequence ID" value="CAR02390.1"/>
    <property type="molecule type" value="Genomic_DNA"/>
</dbReference>
<dbReference type="RefSeq" id="WP_001300662.1">
    <property type="nucleotide sequence ID" value="NC_011742.1"/>
</dbReference>
<dbReference type="SMR" id="B7MIJ0"/>
<dbReference type="GeneID" id="93776366"/>
<dbReference type="KEGG" id="ecz:ECS88_1062"/>
<dbReference type="HOGENOM" id="CLU_023403_2_0_6"/>
<dbReference type="UniPathway" id="UPA00637"/>
<dbReference type="Proteomes" id="UP000000747">
    <property type="component" value="Chromosome"/>
</dbReference>
<dbReference type="GO" id="GO:0030288">
    <property type="term" value="C:outer membrane-bounded periplasmic space"/>
    <property type="evidence" value="ECO:0007669"/>
    <property type="project" value="TreeGrafter"/>
</dbReference>
<dbReference type="GO" id="GO:0030246">
    <property type="term" value="F:carbohydrate binding"/>
    <property type="evidence" value="ECO:0007669"/>
    <property type="project" value="InterPro"/>
</dbReference>
<dbReference type="GO" id="GO:0003824">
    <property type="term" value="F:catalytic activity"/>
    <property type="evidence" value="ECO:0007669"/>
    <property type="project" value="InterPro"/>
</dbReference>
<dbReference type="GO" id="GO:0051274">
    <property type="term" value="P:beta-glucan biosynthetic process"/>
    <property type="evidence" value="ECO:0007669"/>
    <property type="project" value="TreeGrafter"/>
</dbReference>
<dbReference type="FunFam" id="2.60.40.10:FF:000294">
    <property type="entry name" value="Glucans biosynthesis protein G"/>
    <property type="match status" value="1"/>
</dbReference>
<dbReference type="FunFam" id="2.70.98.10:FF:000001">
    <property type="entry name" value="Glucans biosynthesis protein G"/>
    <property type="match status" value="1"/>
</dbReference>
<dbReference type="Gene3D" id="2.70.98.10">
    <property type="match status" value="1"/>
</dbReference>
<dbReference type="Gene3D" id="2.60.40.10">
    <property type="entry name" value="Immunoglobulins"/>
    <property type="match status" value="1"/>
</dbReference>
<dbReference type="HAMAP" id="MF_01069">
    <property type="entry name" value="MdoG_OpgG"/>
    <property type="match status" value="1"/>
</dbReference>
<dbReference type="InterPro" id="IPR011013">
    <property type="entry name" value="Gal_mutarotase_sf_dom"/>
</dbReference>
<dbReference type="InterPro" id="IPR014718">
    <property type="entry name" value="GH-type_carb-bd"/>
</dbReference>
<dbReference type="InterPro" id="IPR014438">
    <property type="entry name" value="Glucan_biosyn_MdoG/MdoD"/>
</dbReference>
<dbReference type="InterPro" id="IPR007444">
    <property type="entry name" value="Glucan_biosyn_MdoG_C"/>
</dbReference>
<dbReference type="InterPro" id="IPR013783">
    <property type="entry name" value="Ig-like_fold"/>
</dbReference>
<dbReference type="InterPro" id="IPR014756">
    <property type="entry name" value="Ig_E-set"/>
</dbReference>
<dbReference type="InterPro" id="IPR023704">
    <property type="entry name" value="MdoG_OpgG"/>
</dbReference>
<dbReference type="PANTHER" id="PTHR30504">
    <property type="entry name" value="GLUCANS BIOSYNTHESIS PROTEIN"/>
    <property type="match status" value="1"/>
</dbReference>
<dbReference type="PANTHER" id="PTHR30504:SF4">
    <property type="entry name" value="GLUCANS BIOSYNTHESIS PROTEIN G"/>
    <property type="match status" value="1"/>
</dbReference>
<dbReference type="Pfam" id="PF04349">
    <property type="entry name" value="MdoG"/>
    <property type="match status" value="1"/>
</dbReference>
<dbReference type="PIRSF" id="PIRSF006281">
    <property type="entry name" value="MdoG"/>
    <property type="match status" value="1"/>
</dbReference>
<dbReference type="SUPFAM" id="SSF81296">
    <property type="entry name" value="E set domains"/>
    <property type="match status" value="1"/>
</dbReference>
<dbReference type="SUPFAM" id="SSF74650">
    <property type="entry name" value="Galactose mutarotase-like"/>
    <property type="match status" value="1"/>
</dbReference>
<reference key="1">
    <citation type="journal article" date="2009" name="PLoS Genet.">
        <title>Organised genome dynamics in the Escherichia coli species results in highly diverse adaptive paths.</title>
        <authorList>
            <person name="Touchon M."/>
            <person name="Hoede C."/>
            <person name="Tenaillon O."/>
            <person name="Barbe V."/>
            <person name="Baeriswyl S."/>
            <person name="Bidet P."/>
            <person name="Bingen E."/>
            <person name="Bonacorsi S."/>
            <person name="Bouchier C."/>
            <person name="Bouvet O."/>
            <person name="Calteau A."/>
            <person name="Chiapello H."/>
            <person name="Clermont O."/>
            <person name="Cruveiller S."/>
            <person name="Danchin A."/>
            <person name="Diard M."/>
            <person name="Dossat C."/>
            <person name="Karoui M.E."/>
            <person name="Frapy E."/>
            <person name="Garry L."/>
            <person name="Ghigo J.M."/>
            <person name="Gilles A.M."/>
            <person name="Johnson J."/>
            <person name="Le Bouguenec C."/>
            <person name="Lescat M."/>
            <person name="Mangenot S."/>
            <person name="Martinez-Jehanne V."/>
            <person name="Matic I."/>
            <person name="Nassif X."/>
            <person name="Oztas S."/>
            <person name="Petit M.A."/>
            <person name="Pichon C."/>
            <person name="Rouy Z."/>
            <person name="Ruf C.S."/>
            <person name="Schneider D."/>
            <person name="Tourret J."/>
            <person name="Vacherie B."/>
            <person name="Vallenet D."/>
            <person name="Medigue C."/>
            <person name="Rocha E.P.C."/>
            <person name="Denamur E."/>
        </authorList>
    </citation>
    <scope>NUCLEOTIDE SEQUENCE [LARGE SCALE GENOMIC DNA]</scope>
    <source>
        <strain>S88 / ExPEC</strain>
    </source>
</reference>